<reference key="1">
    <citation type="journal article" date="2001" name="Lancet">
        <title>Whole genome sequencing of meticillin-resistant Staphylococcus aureus.</title>
        <authorList>
            <person name="Kuroda M."/>
            <person name="Ohta T."/>
            <person name="Uchiyama I."/>
            <person name="Baba T."/>
            <person name="Yuzawa H."/>
            <person name="Kobayashi I."/>
            <person name="Cui L."/>
            <person name="Oguchi A."/>
            <person name="Aoki K."/>
            <person name="Nagai Y."/>
            <person name="Lian J.-Q."/>
            <person name="Ito T."/>
            <person name="Kanamori M."/>
            <person name="Matsumaru H."/>
            <person name="Maruyama A."/>
            <person name="Murakami H."/>
            <person name="Hosoyama A."/>
            <person name="Mizutani-Ui Y."/>
            <person name="Takahashi N.K."/>
            <person name="Sawano T."/>
            <person name="Inoue R."/>
            <person name="Kaito C."/>
            <person name="Sekimizu K."/>
            <person name="Hirakawa H."/>
            <person name="Kuhara S."/>
            <person name="Goto S."/>
            <person name="Yabuzaki J."/>
            <person name="Kanehisa M."/>
            <person name="Yamashita A."/>
            <person name="Oshima K."/>
            <person name="Furuya K."/>
            <person name="Yoshino C."/>
            <person name="Shiba T."/>
            <person name="Hattori M."/>
            <person name="Ogasawara N."/>
            <person name="Hayashi H."/>
            <person name="Hiramatsu K."/>
        </authorList>
    </citation>
    <scope>NUCLEOTIDE SEQUENCE [LARGE SCALE GENOMIC DNA]</scope>
    <source>
        <strain>N315</strain>
    </source>
</reference>
<protein>
    <recommendedName>
        <fullName evidence="1">Ribosome maturation factor RimP</fullName>
    </recommendedName>
</protein>
<proteinExistence type="inferred from homology"/>
<evidence type="ECO:0000255" key="1">
    <source>
        <dbReference type="HAMAP-Rule" id="MF_01077"/>
    </source>
</evidence>
<feature type="chain" id="PRO_0000181921" description="Ribosome maturation factor RimP">
    <location>
        <begin position="1"/>
        <end position="155"/>
    </location>
</feature>
<sequence>MSKITEQVEVIVQPIMEDLNFELVDVEYVKEGRDHFLRISIDKEGGVDLNDCTLASEKISEAMDANDPIPEMYYLDVASPGAERPIKKEQDFQNAITKPVFVSLYVPIEGEKEWLGILQEVNNETIVVQVKIKARTKDIEIPRDKIAKARHAVMI</sequence>
<organism>
    <name type="scientific">Staphylococcus aureus (strain N315)</name>
    <dbReference type="NCBI Taxonomy" id="158879"/>
    <lineage>
        <taxon>Bacteria</taxon>
        <taxon>Bacillati</taxon>
        <taxon>Bacillota</taxon>
        <taxon>Bacilli</taxon>
        <taxon>Bacillales</taxon>
        <taxon>Staphylococcaceae</taxon>
        <taxon>Staphylococcus</taxon>
    </lineage>
</organism>
<name>RIMP_STAAN</name>
<keyword id="KW-0963">Cytoplasm</keyword>
<keyword id="KW-0690">Ribosome biogenesis</keyword>
<dbReference type="EMBL" id="BA000018">
    <property type="protein sequence ID" value="BAB42360.1"/>
    <property type="molecule type" value="Genomic_DNA"/>
</dbReference>
<dbReference type="PIR" id="D89900">
    <property type="entry name" value="D89900"/>
</dbReference>
<dbReference type="RefSeq" id="WP_000036633.1">
    <property type="nucleotide sequence ID" value="NC_002745.2"/>
</dbReference>
<dbReference type="SMR" id="P67221"/>
<dbReference type="EnsemblBacteria" id="BAB42360">
    <property type="protein sequence ID" value="BAB42360"/>
    <property type="gene ID" value="BAB42360"/>
</dbReference>
<dbReference type="KEGG" id="sau:SA1108"/>
<dbReference type="HOGENOM" id="CLU_070525_2_0_9"/>
<dbReference type="GO" id="GO:0005829">
    <property type="term" value="C:cytosol"/>
    <property type="evidence" value="ECO:0007669"/>
    <property type="project" value="TreeGrafter"/>
</dbReference>
<dbReference type="GO" id="GO:0000028">
    <property type="term" value="P:ribosomal small subunit assembly"/>
    <property type="evidence" value="ECO:0007669"/>
    <property type="project" value="TreeGrafter"/>
</dbReference>
<dbReference type="GO" id="GO:0006412">
    <property type="term" value="P:translation"/>
    <property type="evidence" value="ECO:0007669"/>
    <property type="project" value="TreeGrafter"/>
</dbReference>
<dbReference type="CDD" id="cd01734">
    <property type="entry name" value="YlxS_C"/>
    <property type="match status" value="1"/>
</dbReference>
<dbReference type="FunFam" id="3.30.300.70:FF:000001">
    <property type="entry name" value="Ribosome maturation factor RimP"/>
    <property type="match status" value="1"/>
</dbReference>
<dbReference type="Gene3D" id="2.30.30.180">
    <property type="entry name" value="Ribosome maturation factor RimP, C-terminal domain"/>
    <property type="match status" value="1"/>
</dbReference>
<dbReference type="Gene3D" id="3.30.300.70">
    <property type="entry name" value="RimP-like superfamily, N-terminal"/>
    <property type="match status" value="1"/>
</dbReference>
<dbReference type="HAMAP" id="MF_01077">
    <property type="entry name" value="RimP"/>
    <property type="match status" value="1"/>
</dbReference>
<dbReference type="InterPro" id="IPR003728">
    <property type="entry name" value="Ribosome_maturation_RimP"/>
</dbReference>
<dbReference type="InterPro" id="IPR028998">
    <property type="entry name" value="RimP_C"/>
</dbReference>
<dbReference type="InterPro" id="IPR036847">
    <property type="entry name" value="RimP_C_sf"/>
</dbReference>
<dbReference type="InterPro" id="IPR028989">
    <property type="entry name" value="RimP_N"/>
</dbReference>
<dbReference type="InterPro" id="IPR035956">
    <property type="entry name" value="RimP_N_sf"/>
</dbReference>
<dbReference type="NCBIfam" id="NF000928">
    <property type="entry name" value="PRK00092.1-2"/>
    <property type="match status" value="1"/>
</dbReference>
<dbReference type="PANTHER" id="PTHR33867">
    <property type="entry name" value="RIBOSOME MATURATION FACTOR RIMP"/>
    <property type="match status" value="1"/>
</dbReference>
<dbReference type="PANTHER" id="PTHR33867:SF1">
    <property type="entry name" value="RIBOSOME MATURATION FACTOR RIMP"/>
    <property type="match status" value="1"/>
</dbReference>
<dbReference type="Pfam" id="PF17384">
    <property type="entry name" value="DUF150_C"/>
    <property type="match status" value="1"/>
</dbReference>
<dbReference type="Pfam" id="PF02576">
    <property type="entry name" value="RimP_N"/>
    <property type="match status" value="1"/>
</dbReference>
<dbReference type="SUPFAM" id="SSF74942">
    <property type="entry name" value="YhbC-like, C-terminal domain"/>
    <property type="match status" value="1"/>
</dbReference>
<dbReference type="SUPFAM" id="SSF75420">
    <property type="entry name" value="YhbC-like, N-terminal domain"/>
    <property type="match status" value="1"/>
</dbReference>
<gene>
    <name evidence="1" type="primary">rimP</name>
    <name type="ordered locus">SA1108</name>
</gene>
<comment type="function">
    <text evidence="1">Required for maturation of 30S ribosomal subunits.</text>
</comment>
<comment type="subcellular location">
    <subcellularLocation>
        <location evidence="1">Cytoplasm</location>
    </subcellularLocation>
</comment>
<comment type="similarity">
    <text evidence="1">Belongs to the RimP family.</text>
</comment>
<accession>P67221</accession>
<accession>Q99UK7</accession>